<name>EGR2_RAT</name>
<accession>P51774</accession>
<accession>Q54AG4</accession>
<reference key="1">
    <citation type="submission" date="1996-12" db="EMBL/GenBank/DDBJ databases">
        <title>cDNA for rat krox20.</title>
        <authorList>
            <person name="Zaharic T."/>
            <person name="Durtschi B.A."/>
            <person name="Mason-Parker S.E."/>
            <person name="Abraham W.C."/>
            <person name="Tate W.P."/>
        </authorList>
    </citation>
    <scope>NUCLEOTIDE SEQUENCE [MRNA] (ISOFORM LONG)</scope>
    <source>
        <strain>Sprague-Dawley</strain>
        <tissue>Brain</tissue>
    </source>
</reference>
<reference key="2">
    <citation type="journal article" date="1996" name="Biochem. Biophys. Res. Commun.">
        <title>mRNA differential display reveals Krox-20 as a neural plasticity-regulated gene in the rat hippocampus.</title>
        <authorList>
            <person name="Inokuchi K."/>
            <person name="Murayama A."/>
            <person name="Ozawa F."/>
        </authorList>
    </citation>
    <scope>NUCLEOTIDE SEQUENCE [MRNA] (ISOFORM SHORT)</scope>
    <source>
        <strain>Wistar</strain>
        <tissue>Hippocampus</tissue>
    </source>
</reference>
<reference key="3">
    <citation type="journal article" date="2000" name="Am. J. Respir. Cell Mol. Biol.">
        <title>Transcription of krox-20/egr-2 is upregulated after exposure to fibrous particles and adhesion in rat alveolar macrophages.</title>
        <authorList>
            <person name="Hirano S."/>
            <person name="Anuradha C.D."/>
            <person name="Kanno S."/>
        </authorList>
    </citation>
    <scope>NUCLEOTIDE SEQUENCE [MRNA] (ISOFORM LONG)</scope>
    <source>
        <strain>Sprague-Dawley</strain>
    </source>
</reference>
<protein>
    <recommendedName>
        <fullName>E3 SUMO-protein ligase EGR2</fullName>
        <ecNumber evidence="2">2.3.2.-</ecNumber>
    </recommendedName>
    <alternativeName>
        <fullName evidence="6">E3 SUMO-protein transferase ERG2</fullName>
    </alternativeName>
    <alternativeName>
        <fullName>Early growth response protein 2</fullName>
        <shortName>EGR-2</shortName>
    </alternativeName>
    <alternativeName>
        <fullName>Zinc finger protein Krox-20</fullName>
    </alternativeName>
</protein>
<feature type="chain" id="PRO_0000047121" description="E3 SUMO-protein ligase EGR2">
    <location>
        <begin position="1"/>
        <end position="470"/>
    </location>
</feature>
<feature type="zinc finger region" description="C2H2-type 1" evidence="3">
    <location>
        <begin position="337"/>
        <end position="361"/>
    </location>
</feature>
<feature type="zinc finger region" description="C2H2-type 2" evidence="3">
    <location>
        <begin position="367"/>
        <end position="389"/>
    </location>
</feature>
<feature type="zinc finger region" description="C2H2-type 3" evidence="3">
    <location>
        <begin position="395"/>
        <end position="417"/>
    </location>
</feature>
<feature type="region of interest" description="Disordered" evidence="4">
    <location>
        <begin position="126"/>
        <end position="153"/>
    </location>
</feature>
<feature type="region of interest" description="Disordered" evidence="4">
    <location>
        <begin position="159"/>
        <end position="178"/>
    </location>
</feature>
<feature type="region of interest" description="Disordered" evidence="4">
    <location>
        <begin position="184"/>
        <end position="211"/>
    </location>
</feature>
<feature type="region of interest" description="Disordered" evidence="4">
    <location>
        <begin position="275"/>
        <end position="344"/>
    </location>
</feature>
<feature type="region of interest" description="Disordered" evidence="4">
    <location>
        <begin position="408"/>
        <end position="470"/>
    </location>
</feature>
<feature type="compositionally biased region" description="Low complexity" evidence="4">
    <location>
        <begin position="126"/>
        <end position="141"/>
    </location>
</feature>
<feature type="compositionally biased region" description="Gly residues" evidence="4">
    <location>
        <begin position="281"/>
        <end position="291"/>
    </location>
</feature>
<feature type="compositionally biased region" description="Basic residues" evidence="4">
    <location>
        <begin position="412"/>
        <end position="422"/>
    </location>
</feature>
<feature type="compositionally biased region" description="Low complexity" evidence="4">
    <location>
        <begin position="426"/>
        <end position="439"/>
    </location>
</feature>
<feature type="compositionally biased region" description="Gly residues" evidence="4">
    <location>
        <begin position="440"/>
        <end position="450"/>
    </location>
</feature>
<feature type="modified residue" description="N6-acetyllysine; by EP300" evidence="1">
    <location>
        <position position="247"/>
    </location>
</feature>
<feature type="splice variant" id="VSP_006865" description="In isoform Short." evidence="5">
    <location>
        <begin position="1"/>
        <end position="50"/>
    </location>
</feature>
<keyword id="KW-0007">Acetylation</keyword>
<keyword id="KW-0010">Activator</keyword>
<keyword id="KW-0025">Alternative splicing</keyword>
<keyword id="KW-0238">DNA-binding</keyword>
<keyword id="KW-0479">Metal-binding</keyword>
<keyword id="KW-0539">Nucleus</keyword>
<keyword id="KW-1185">Reference proteome</keyword>
<keyword id="KW-0677">Repeat</keyword>
<keyword id="KW-0804">Transcription</keyword>
<keyword id="KW-0805">Transcription regulation</keyword>
<keyword id="KW-0808">Transferase</keyword>
<keyword id="KW-0832">Ubl conjugation</keyword>
<keyword id="KW-0833">Ubl conjugation pathway</keyword>
<keyword id="KW-0862">Zinc</keyword>
<keyword id="KW-0863">Zinc-finger</keyword>
<comment type="function">
    <text evidence="1">Sequence-specific DNA-binding transcription factor (By similarity). Plays a role in hindbrain segmentation by regulating the expression of a subset of homeobox containing genes and in Schwann cell myelination by regulating the expression of genes involved in the formation and maintenance of myelin (By similarity). Binds to two EGR2-consensus sites EGR2A (5'-CTGTAGGAG-3') and EGR2B (5'-ATGTAGGTG-3') in the HOXB3 enhancer and promotes HOXB3 transcriptional activation (By similarity). Binds to specific DNA sites located in the promoter region of HOXA4, HOXB2 and ERBB2 (By similarity). Regulates hindbrain segmentation by controlling the expression of Hox genes, such as HOXA4, HOXB3 and HOXB2, and thereby specifying odd and even rhombomeres (By similarity). Promotes the expression of HOXB3 in the rhombomere r5 in the hindbrain (By similarity). Regulates myelination in the peripheral nervous system after birth, possibly by regulating the expression of myelin proteins, such as MPZ, and by promoting the differentiation of Schwann cells (By similarity). Involved in the development of the jaw openener musculature, probably by playing a role in its innervation through trigeminal motor neurons (By similarity). May play a role in adipogenesis, possibly by regulating the expression of CEBPB (By similarity).</text>
</comment>
<comment type="function">
    <text evidence="2">E3 SUMO-protein ligase helping SUMO1 conjugation to its coregulators NAB1 and NAB2, whose sumoylation down-regulates EGR2 transcriptional activity.</text>
</comment>
<comment type="pathway">
    <text>Protein modification; protein sumoylation.</text>
</comment>
<comment type="subunit">
    <text evidence="1 2">Interacts with HCFC1 (By similarity). Interacts with WWP2 (By similarity). Interacts with UBC9 (By similarity). Interacts with CITED1 (By similarity). Interacts (via phosphorylated form) with SFN (By similarity).</text>
</comment>
<comment type="subcellular location">
    <subcellularLocation>
        <location evidence="1">Nucleus</location>
    </subcellularLocation>
</comment>
<comment type="alternative products">
    <event type="alternative splicing"/>
    <isoform>
        <id>P51774-1</id>
        <name>Long</name>
        <sequence type="displayed"/>
    </isoform>
    <isoform>
        <id>P51774-2</id>
        <name>Short</name>
        <sequence type="described" ref="VSP_006865"/>
    </isoform>
</comment>
<comment type="PTM">
    <text evidence="1">Ubiquitinated by WWP2 leading to proteasomal degradation.</text>
</comment>
<comment type="PTM">
    <text evidence="1">Acetylated at Lys-247. May be deacetylated by HDAC6, HDAC10 or SIRT1.</text>
</comment>
<comment type="similarity">
    <text evidence="6">Belongs to the EGR C2H2-type zinc-finger protein family.</text>
</comment>
<dbReference type="EC" id="2.3.2.-" evidence="2"/>
<dbReference type="EMBL" id="U78102">
    <property type="protein sequence ID" value="AAB36783.1"/>
    <property type="molecule type" value="mRNA"/>
</dbReference>
<dbReference type="EMBL" id="D83508">
    <property type="protein sequence ID" value="BAA11932.1"/>
    <property type="molecule type" value="mRNA"/>
</dbReference>
<dbReference type="EMBL" id="AB032420">
    <property type="protein sequence ID" value="BAA89319.1"/>
    <property type="molecule type" value="mRNA"/>
</dbReference>
<dbReference type="PIR" id="JC4716">
    <property type="entry name" value="JC4716"/>
</dbReference>
<dbReference type="RefSeq" id="NP_446085.1">
    <molecule id="P51774-1"/>
    <property type="nucleotide sequence ID" value="NM_053633.2"/>
</dbReference>
<dbReference type="RefSeq" id="XP_017457019.1">
    <molecule id="P51774-2"/>
    <property type="nucleotide sequence ID" value="XM_017601530.2"/>
</dbReference>
<dbReference type="SMR" id="P51774"/>
<dbReference type="FunCoup" id="P51774">
    <property type="interactions" value="198"/>
</dbReference>
<dbReference type="STRING" id="10116.ENSRNOP00000000792"/>
<dbReference type="PhosphoSitePlus" id="P51774"/>
<dbReference type="PaxDb" id="10116-ENSRNOP00000000792"/>
<dbReference type="Ensembl" id="ENSRNOT00000000792.5">
    <molecule id="P51774-1"/>
    <property type="protein sequence ID" value="ENSRNOP00000000792.2"/>
    <property type="gene ID" value="ENSRNOG00000000640.5"/>
</dbReference>
<dbReference type="GeneID" id="114090"/>
<dbReference type="KEGG" id="rno:114090"/>
<dbReference type="UCSC" id="RGD:621608">
    <molecule id="P51774-1"/>
    <property type="organism name" value="rat"/>
</dbReference>
<dbReference type="AGR" id="RGD:621608"/>
<dbReference type="CTD" id="1959"/>
<dbReference type="RGD" id="621608">
    <property type="gene designation" value="Egr2"/>
</dbReference>
<dbReference type="eggNOG" id="KOG1721">
    <property type="taxonomic scope" value="Eukaryota"/>
</dbReference>
<dbReference type="GeneTree" id="ENSGT00940000158394"/>
<dbReference type="HOGENOM" id="CLU_043235_0_0_1"/>
<dbReference type="InParanoid" id="P51774"/>
<dbReference type="OMA" id="QCQRELH"/>
<dbReference type="OrthoDB" id="8197458at2759"/>
<dbReference type="PhylomeDB" id="P51774"/>
<dbReference type="TreeFam" id="TF318980"/>
<dbReference type="Reactome" id="R-RNO-9031628">
    <property type="pathway name" value="NGF-stimulated transcription"/>
</dbReference>
<dbReference type="UniPathway" id="UPA00886"/>
<dbReference type="PRO" id="PR:P51774"/>
<dbReference type="Proteomes" id="UP000002494">
    <property type="component" value="Chromosome 20"/>
</dbReference>
<dbReference type="Bgee" id="ENSRNOG00000000640">
    <property type="expression patterns" value="Expressed in thymus and 13 other cell types or tissues"/>
</dbReference>
<dbReference type="GO" id="GO:0005737">
    <property type="term" value="C:cytoplasm"/>
    <property type="evidence" value="ECO:0000250"/>
    <property type="project" value="UniProtKB"/>
</dbReference>
<dbReference type="GO" id="GO:0005654">
    <property type="term" value="C:nucleoplasm"/>
    <property type="evidence" value="ECO:0000304"/>
    <property type="project" value="Reactome"/>
</dbReference>
<dbReference type="GO" id="GO:0005634">
    <property type="term" value="C:nucleus"/>
    <property type="evidence" value="ECO:0000250"/>
    <property type="project" value="UniProtKB"/>
</dbReference>
<dbReference type="GO" id="GO:0003682">
    <property type="term" value="F:chromatin binding"/>
    <property type="evidence" value="ECO:0000250"/>
    <property type="project" value="UniProtKB"/>
</dbReference>
<dbReference type="GO" id="GO:0003677">
    <property type="term" value="F:DNA binding"/>
    <property type="evidence" value="ECO:0000266"/>
    <property type="project" value="RGD"/>
</dbReference>
<dbReference type="GO" id="GO:0001228">
    <property type="term" value="F:DNA-binding transcription activator activity, RNA polymerase II-specific"/>
    <property type="evidence" value="ECO:0000266"/>
    <property type="project" value="RGD"/>
</dbReference>
<dbReference type="GO" id="GO:0003700">
    <property type="term" value="F:DNA-binding transcription factor activity"/>
    <property type="evidence" value="ECO:0000250"/>
    <property type="project" value="UniProtKB"/>
</dbReference>
<dbReference type="GO" id="GO:0000981">
    <property type="term" value="F:DNA-binding transcription factor activity, RNA polymerase II-specific"/>
    <property type="evidence" value="ECO:0000250"/>
    <property type="project" value="UniProtKB"/>
</dbReference>
<dbReference type="GO" id="GO:0071837">
    <property type="term" value="F:HMG box domain binding"/>
    <property type="evidence" value="ECO:0000353"/>
    <property type="project" value="UniProtKB"/>
</dbReference>
<dbReference type="GO" id="GO:0000978">
    <property type="term" value="F:RNA polymerase II cis-regulatory region sequence-specific DNA binding"/>
    <property type="evidence" value="ECO:0000266"/>
    <property type="project" value="RGD"/>
</dbReference>
<dbReference type="GO" id="GO:0061629">
    <property type="term" value="F:RNA polymerase II-specific DNA-binding transcription factor binding"/>
    <property type="evidence" value="ECO:0000266"/>
    <property type="project" value="RGD"/>
</dbReference>
<dbReference type="GO" id="GO:0043565">
    <property type="term" value="F:sequence-specific DNA binding"/>
    <property type="evidence" value="ECO:0000250"/>
    <property type="project" value="UniProtKB"/>
</dbReference>
<dbReference type="GO" id="GO:1990837">
    <property type="term" value="F:sequence-specific double-stranded DNA binding"/>
    <property type="evidence" value="ECO:0000266"/>
    <property type="project" value="RGD"/>
</dbReference>
<dbReference type="GO" id="GO:0061665">
    <property type="term" value="F:SUMO ligase activity"/>
    <property type="evidence" value="ECO:0000266"/>
    <property type="project" value="RGD"/>
</dbReference>
<dbReference type="GO" id="GO:0000976">
    <property type="term" value="F:transcription cis-regulatory region binding"/>
    <property type="evidence" value="ECO:0000250"/>
    <property type="project" value="UniProtKB"/>
</dbReference>
<dbReference type="GO" id="GO:0031625">
    <property type="term" value="F:ubiquitin protein ligase binding"/>
    <property type="evidence" value="ECO:0000266"/>
    <property type="project" value="RGD"/>
</dbReference>
<dbReference type="GO" id="GO:0008270">
    <property type="term" value="F:zinc ion binding"/>
    <property type="evidence" value="ECO:0007669"/>
    <property type="project" value="UniProtKB-KW"/>
</dbReference>
<dbReference type="GO" id="GO:0035904">
    <property type="term" value="P:aorta development"/>
    <property type="evidence" value="ECO:0000266"/>
    <property type="project" value="RGD"/>
</dbReference>
<dbReference type="GO" id="GO:0035284">
    <property type="term" value="P:brain segmentation"/>
    <property type="evidence" value="ECO:0000266"/>
    <property type="project" value="RGD"/>
</dbReference>
<dbReference type="GO" id="GO:0021612">
    <property type="term" value="P:facial nerve structural organization"/>
    <property type="evidence" value="ECO:0000250"/>
    <property type="project" value="UniProtKB"/>
</dbReference>
<dbReference type="GO" id="GO:0045444">
    <property type="term" value="P:fat cell differentiation"/>
    <property type="evidence" value="ECO:0000266"/>
    <property type="project" value="RGD"/>
</dbReference>
<dbReference type="GO" id="GO:0010467">
    <property type="term" value="P:gene expression"/>
    <property type="evidence" value="ECO:0000266"/>
    <property type="project" value="RGD"/>
</dbReference>
<dbReference type="GO" id="GO:0007611">
    <property type="term" value="P:learning or memory"/>
    <property type="evidence" value="ECO:0000270"/>
    <property type="project" value="RGD"/>
</dbReference>
<dbReference type="GO" id="GO:0008045">
    <property type="term" value="P:motor neuron axon guidance"/>
    <property type="evidence" value="ECO:0000266"/>
    <property type="project" value="RGD"/>
</dbReference>
<dbReference type="GO" id="GO:0042552">
    <property type="term" value="P:myelination"/>
    <property type="evidence" value="ECO:0000266"/>
    <property type="project" value="RGD"/>
</dbReference>
<dbReference type="GO" id="GO:0045893">
    <property type="term" value="P:positive regulation of DNA-templated transcription"/>
    <property type="evidence" value="ECO:0000250"/>
    <property type="project" value="UniProtKB"/>
</dbReference>
<dbReference type="GO" id="GO:0031643">
    <property type="term" value="P:positive regulation of myelination"/>
    <property type="evidence" value="ECO:0000250"/>
    <property type="project" value="UniProtKB"/>
</dbReference>
<dbReference type="GO" id="GO:0014040">
    <property type="term" value="P:positive regulation of Schwann cell differentiation"/>
    <property type="evidence" value="ECO:0000250"/>
    <property type="project" value="UniProtKB"/>
</dbReference>
<dbReference type="GO" id="GO:0045944">
    <property type="term" value="P:positive regulation of transcription by RNA polymerase II"/>
    <property type="evidence" value="ECO:0000250"/>
    <property type="project" value="UniProtKB"/>
</dbReference>
<dbReference type="GO" id="GO:0006611">
    <property type="term" value="P:protein export from nucleus"/>
    <property type="evidence" value="ECO:0000250"/>
    <property type="project" value="UniProtKB"/>
</dbReference>
<dbReference type="GO" id="GO:0016925">
    <property type="term" value="P:protein sumoylation"/>
    <property type="evidence" value="ECO:0000266"/>
    <property type="project" value="RGD"/>
</dbReference>
<dbReference type="GO" id="GO:0006355">
    <property type="term" value="P:regulation of DNA-templated transcription"/>
    <property type="evidence" value="ECO:0000266"/>
    <property type="project" value="RGD"/>
</dbReference>
<dbReference type="GO" id="GO:0048168">
    <property type="term" value="P:regulation of neuronal synaptic plasticity"/>
    <property type="evidence" value="ECO:0000270"/>
    <property type="project" value="RGD"/>
</dbReference>
<dbReference type="GO" id="GO:0030278">
    <property type="term" value="P:regulation of ossification"/>
    <property type="evidence" value="ECO:0000266"/>
    <property type="project" value="RGD"/>
</dbReference>
<dbReference type="GO" id="GO:0006357">
    <property type="term" value="P:regulation of transcription by RNA polymerase II"/>
    <property type="evidence" value="ECO:0000318"/>
    <property type="project" value="GO_Central"/>
</dbReference>
<dbReference type="GO" id="GO:0032868">
    <property type="term" value="P:response to insulin"/>
    <property type="evidence" value="ECO:0000315"/>
    <property type="project" value="RGD"/>
</dbReference>
<dbReference type="GO" id="GO:0021569">
    <property type="term" value="P:rhombomere 3 development"/>
    <property type="evidence" value="ECO:0000266"/>
    <property type="project" value="RGD"/>
</dbReference>
<dbReference type="GO" id="GO:0021660">
    <property type="term" value="P:rhombomere 3 formation"/>
    <property type="evidence" value="ECO:0000266"/>
    <property type="project" value="RGD"/>
</dbReference>
<dbReference type="GO" id="GO:0021659">
    <property type="term" value="P:rhombomere 3 structural organization"/>
    <property type="evidence" value="ECO:0000250"/>
    <property type="project" value="UniProtKB"/>
</dbReference>
<dbReference type="GO" id="GO:0021666">
    <property type="term" value="P:rhombomere 5 formation"/>
    <property type="evidence" value="ECO:0000266"/>
    <property type="project" value="RGD"/>
</dbReference>
<dbReference type="GO" id="GO:0021665">
    <property type="term" value="P:rhombomere 5 structural organization"/>
    <property type="evidence" value="ECO:0000250"/>
    <property type="project" value="UniProtKB"/>
</dbReference>
<dbReference type="GO" id="GO:0007622">
    <property type="term" value="P:rhythmic behavior"/>
    <property type="evidence" value="ECO:0000266"/>
    <property type="project" value="RGD"/>
</dbReference>
<dbReference type="GO" id="GO:0014037">
    <property type="term" value="P:Schwann cell differentiation"/>
    <property type="evidence" value="ECO:0000250"/>
    <property type="project" value="UniProtKB"/>
</dbReference>
<dbReference type="GO" id="GO:0035914">
    <property type="term" value="P:skeletal muscle cell differentiation"/>
    <property type="evidence" value="ECO:0000250"/>
    <property type="project" value="UniProtKB"/>
</dbReference>
<dbReference type="FunFam" id="3.30.160.60:FF:000837">
    <property type="entry name" value="E3 SUMO-protein ligase EGR2 isoform X1"/>
    <property type="match status" value="1"/>
</dbReference>
<dbReference type="FunFam" id="3.30.160.60:FF:000324">
    <property type="entry name" value="Early growth response protein 4"/>
    <property type="match status" value="1"/>
</dbReference>
<dbReference type="FunFam" id="3.30.160.60:FF:000419">
    <property type="entry name" value="Early growth response protein 4"/>
    <property type="match status" value="1"/>
</dbReference>
<dbReference type="Gene3D" id="3.30.160.60">
    <property type="entry name" value="Classic Zinc Finger"/>
    <property type="match status" value="3"/>
</dbReference>
<dbReference type="InterPro" id="IPR021849">
    <property type="entry name" value="EGR_N"/>
</dbReference>
<dbReference type="InterPro" id="IPR036236">
    <property type="entry name" value="Znf_C2H2_sf"/>
</dbReference>
<dbReference type="InterPro" id="IPR013087">
    <property type="entry name" value="Znf_C2H2_type"/>
</dbReference>
<dbReference type="PANTHER" id="PTHR23235:SF54">
    <property type="entry name" value="E3 SUMO-PROTEIN LIGASE EGR2"/>
    <property type="match status" value="1"/>
</dbReference>
<dbReference type="PANTHER" id="PTHR23235">
    <property type="entry name" value="KRUEPPEL-LIKE TRANSCRIPTION FACTOR"/>
    <property type="match status" value="1"/>
</dbReference>
<dbReference type="Pfam" id="PF11928">
    <property type="entry name" value="DUF3446"/>
    <property type="match status" value="1"/>
</dbReference>
<dbReference type="Pfam" id="PF00096">
    <property type="entry name" value="zf-C2H2"/>
    <property type="match status" value="3"/>
</dbReference>
<dbReference type="SMART" id="SM00355">
    <property type="entry name" value="ZnF_C2H2"/>
    <property type="match status" value="3"/>
</dbReference>
<dbReference type="SUPFAM" id="SSF57667">
    <property type="entry name" value="beta-beta-alpha zinc fingers"/>
    <property type="match status" value="2"/>
</dbReference>
<dbReference type="PROSITE" id="PS00028">
    <property type="entry name" value="ZINC_FINGER_C2H2_1"/>
    <property type="match status" value="3"/>
</dbReference>
<dbReference type="PROSITE" id="PS50157">
    <property type="entry name" value="ZINC_FINGER_C2H2_2"/>
    <property type="match status" value="3"/>
</dbReference>
<proteinExistence type="evidence at transcript level"/>
<organism>
    <name type="scientific">Rattus norvegicus</name>
    <name type="common">Rat</name>
    <dbReference type="NCBI Taxonomy" id="10116"/>
    <lineage>
        <taxon>Eukaryota</taxon>
        <taxon>Metazoa</taxon>
        <taxon>Chordata</taxon>
        <taxon>Craniata</taxon>
        <taxon>Vertebrata</taxon>
        <taxon>Euteleostomi</taxon>
        <taxon>Mammalia</taxon>
        <taxon>Eutheria</taxon>
        <taxon>Euarchontoglires</taxon>
        <taxon>Glires</taxon>
        <taxon>Rodentia</taxon>
        <taxon>Myomorpha</taxon>
        <taxon>Muroidea</taxon>
        <taxon>Muridae</taxon>
        <taxon>Murinae</taxon>
        <taxon>Rattus</taxon>
    </lineage>
</organism>
<evidence type="ECO:0000250" key="1">
    <source>
        <dbReference type="UniProtKB" id="P08152"/>
    </source>
</evidence>
<evidence type="ECO:0000250" key="2">
    <source>
        <dbReference type="UniProtKB" id="P11161"/>
    </source>
</evidence>
<evidence type="ECO:0000255" key="3">
    <source>
        <dbReference type="PROSITE-ProRule" id="PRU00042"/>
    </source>
</evidence>
<evidence type="ECO:0000256" key="4">
    <source>
        <dbReference type="SAM" id="MobiDB-lite"/>
    </source>
</evidence>
<evidence type="ECO:0000303" key="5">
    <source>
    </source>
</evidence>
<evidence type="ECO:0000305" key="6"/>
<gene>
    <name type="primary">Egr2</name>
    <name type="synonym">Egr-2</name>
    <name type="synonym">Krox-20</name>
    <name type="synonym">Krox20</name>
</gene>
<sequence>MMTAKAVDKIPVTLSGFMHQLPDSLYPVEDLAAPSVTIFPNGELGGPFDQMNGVAGDGMINIDMTGEKRPLDLPYPSSFAPISAPRNQTFTYMGKFSIDPQYPGASCYPEGIINIVSAGILQGVTPPASTTASSSVTSASPNPLATGPLGVCTMSQTQPELDHLYSPPPPPPPYSGCTGDLYQDPSAFLSPPPTTSTSSLAYQPPPSYPSPKPAMDPGLIPMIPDYPGFFPSPCQRDPHGAAGPDRKPFPCPLDSLRVPPPLTPLSTIRNFTLGGPSAGVTGPGASGGGEGPRLPGSGSAAVTATPYNPHHLPLRPILRPRKYPNRPSKTPVHERPYPCPAEGCDRRFSRSDELTRHIRIHTGHKPFQCRICMRNFSRSDHLTTHIRTHTGEKPFACDYCGRKFARSDERKRHTKIHLRQKERKSSAPSSSASAQSSASGPGGSQAGGSLCGNSAIGGPLASCTSRTRTP</sequence>